<name>KAD1_SCHMA</name>
<keyword id="KW-0002">3D-structure</keyword>
<keyword id="KW-0067">ATP-binding</keyword>
<keyword id="KW-0963">Cytoplasm</keyword>
<keyword id="KW-0418">Kinase</keyword>
<keyword id="KW-0545">Nucleotide biosynthesis</keyword>
<keyword id="KW-0547">Nucleotide-binding</keyword>
<keyword id="KW-0660">Purine salvage</keyword>
<keyword id="KW-1185">Reference proteome</keyword>
<keyword id="KW-0808">Transferase</keyword>
<organism evidence="10 11">
    <name type="scientific">Schistosoma mansoni</name>
    <name type="common">Blood fluke</name>
    <dbReference type="NCBI Taxonomy" id="6183"/>
    <lineage>
        <taxon>Eukaryota</taxon>
        <taxon>Metazoa</taxon>
        <taxon>Spiralia</taxon>
        <taxon>Lophotrochozoa</taxon>
        <taxon>Platyhelminthes</taxon>
        <taxon>Trematoda</taxon>
        <taxon>Digenea</taxon>
        <taxon>Strigeidida</taxon>
        <taxon>Schistosomatoidea</taxon>
        <taxon>Schistosomatidae</taxon>
        <taxon>Schistosoma</taxon>
    </lineage>
</organism>
<gene>
    <name evidence="5" type="ORF">Smp_071390</name>
</gene>
<feature type="chain" id="PRO_0000461285" description="Adenylate kinase 1">
    <location>
        <begin position="1"/>
        <end position="197"/>
    </location>
</feature>
<feature type="region of interest" description="NMP" evidence="1">
    <location>
        <begin position="39"/>
        <end position="68"/>
    </location>
</feature>
<feature type="region of interest" description="LID" evidence="1">
    <location>
        <begin position="132"/>
        <end position="142"/>
    </location>
</feature>
<feature type="binding site" evidence="1">
    <location>
        <begin position="19"/>
        <end position="24"/>
    </location>
    <ligand>
        <name>ATP</name>
        <dbReference type="ChEBI" id="CHEBI:30616"/>
    </ligand>
</feature>
<feature type="binding site" evidence="1">
    <location>
        <position position="40"/>
    </location>
    <ligand>
        <name>AMP</name>
        <dbReference type="ChEBI" id="CHEBI:456215"/>
    </ligand>
</feature>
<feature type="binding site" evidence="1">
    <location>
        <position position="45"/>
    </location>
    <ligand>
        <name>AMP</name>
        <dbReference type="ChEBI" id="CHEBI:456215"/>
    </ligand>
</feature>
<feature type="binding site" evidence="1">
    <location>
        <begin position="95"/>
        <end position="98"/>
    </location>
    <ligand>
        <name>AMP</name>
        <dbReference type="ChEBI" id="CHEBI:456215"/>
    </ligand>
</feature>
<feature type="binding site" evidence="1">
    <location>
        <position position="102"/>
    </location>
    <ligand>
        <name>AMP</name>
        <dbReference type="ChEBI" id="CHEBI:456215"/>
    </ligand>
</feature>
<feature type="binding site" evidence="1">
    <location>
        <position position="133"/>
    </location>
    <ligand>
        <name>ATP</name>
        <dbReference type="ChEBI" id="CHEBI:30616"/>
    </ligand>
</feature>
<feature type="binding site" evidence="1">
    <location>
        <position position="139"/>
    </location>
    <ligand>
        <name>AMP</name>
        <dbReference type="ChEBI" id="CHEBI:456215"/>
    </ligand>
</feature>
<feature type="binding site" evidence="1">
    <location>
        <position position="150"/>
    </location>
    <ligand>
        <name>AMP</name>
        <dbReference type="ChEBI" id="CHEBI:456215"/>
    </ligand>
</feature>
<feature type="binding site" evidence="1">
    <location>
        <position position="178"/>
    </location>
    <ligand>
        <name>ATP</name>
        <dbReference type="ChEBI" id="CHEBI:30616"/>
    </ligand>
</feature>
<feature type="strand" evidence="13">
    <location>
        <begin position="10"/>
        <end position="15"/>
    </location>
</feature>
<feature type="helix" evidence="13">
    <location>
        <begin position="22"/>
        <end position="33"/>
    </location>
</feature>
<feature type="strand" evidence="13">
    <location>
        <begin position="36"/>
        <end position="38"/>
    </location>
</feature>
<feature type="helix" evidence="13">
    <location>
        <begin position="40"/>
        <end position="48"/>
    </location>
</feature>
<feature type="helix" evidence="13">
    <location>
        <begin position="53"/>
        <end position="64"/>
    </location>
</feature>
<feature type="helix" evidence="13">
    <location>
        <begin position="70"/>
        <end position="84"/>
    </location>
</feature>
<feature type="turn" evidence="13">
    <location>
        <begin position="85"/>
        <end position="87"/>
    </location>
</feature>
<feature type="strand" evidence="13">
    <location>
        <begin position="89"/>
        <end position="93"/>
    </location>
</feature>
<feature type="helix" evidence="13">
    <location>
        <begin position="100"/>
        <end position="109"/>
    </location>
</feature>
<feature type="strand" evidence="13">
    <location>
        <begin position="114"/>
        <end position="120"/>
    </location>
</feature>
<feature type="helix" evidence="13">
    <location>
        <begin position="123"/>
        <end position="130"/>
    </location>
</feature>
<feature type="helix" evidence="13">
    <location>
        <begin position="141"/>
        <end position="157"/>
    </location>
</feature>
<feature type="helix" evidence="13">
    <location>
        <begin position="159"/>
        <end position="166"/>
    </location>
</feature>
<feature type="turn" evidence="13">
    <location>
        <begin position="167"/>
        <end position="169"/>
    </location>
</feature>
<feature type="strand" evidence="13">
    <location>
        <begin position="171"/>
        <end position="175"/>
    </location>
</feature>
<feature type="helix" evidence="13">
    <location>
        <begin position="180"/>
        <end position="192"/>
    </location>
</feature>
<feature type="turn" evidence="13">
    <location>
        <begin position="193"/>
        <end position="195"/>
    </location>
</feature>
<comment type="function">
    <text evidence="3 4">Catalyzes the reversible transfer of the terminal phosphate group between ATP and AMP (PubMed:22841753). Plays an important role in cellular energy homeostasis and in adenine nucleotide metabolism (By similarity).</text>
</comment>
<comment type="catalytic activity">
    <reaction evidence="4">
        <text>AMP + ATP = 2 ADP</text>
        <dbReference type="Rhea" id="RHEA:12973"/>
        <dbReference type="ChEBI" id="CHEBI:30616"/>
        <dbReference type="ChEBI" id="CHEBI:456215"/>
        <dbReference type="ChEBI" id="CHEBI:456216"/>
        <dbReference type="EC" id="2.7.4.3"/>
    </reaction>
</comment>
<comment type="cofactor">
    <cofactor evidence="2">
        <name>Mg(2+)</name>
        <dbReference type="ChEBI" id="CHEBI:18420"/>
    </cofactor>
</comment>
<comment type="biophysicochemical properties">
    <kinetics>
        <KM evidence="4">244 uM for AMP (at pH 7.4)</KM>
        <KM evidence="4">272 uM for ATP (at pH 7.4)</KM>
        <text evidence="4">kcat is 50 sec(-1) with AMP as substrate. kcat is 25 sec(-1) with ATP as substrate.</text>
    </kinetics>
</comment>
<comment type="pathway">
    <text evidence="8">Purine metabolism; purine nucleotide biosynthesis.</text>
</comment>
<comment type="subunit">
    <text evidence="4">Monomer.</text>
</comment>
<comment type="subcellular location">
    <subcellularLocation>
        <location evidence="3">Cytoplasm</location>
    </subcellularLocation>
</comment>
<comment type="domain">
    <text evidence="1">Consists of three domains, a large central CORE domain and two small peripheral domains, NMPbind and LID, which undergo movements during catalysis. The LID domain closes over the site of phosphoryl transfer upon ATP binding. Assembling and dissambling the active center during each catalytic cycle provides an effective means to prevent ATP hydrolysis.</text>
</comment>
<comment type="similarity">
    <text evidence="7">Belongs to the adenylate kinase family. AK1 subfamily.</text>
</comment>
<sequence length="197" mass="22303">MTDQKLAKAKVIFVLGGPGSGKGTQCEKLVQKFHFNHLSSGDLLRAEVQSGSPKGKELKAMMERGELVPLEVVLALLKEAMIKLVDKNCHFLIDGYPRELDQGIKFEKEVCPCLCVINFDVSEEVMRKRLLKRAETSNRVDDNEETIVKRFRTFNELTKPVIEHYKQQNKVITIDASGTVDAIFDKVNHELQKFGVK</sequence>
<reference evidence="9" key="1">
    <citation type="journal article" date="2015" name="Front. Immunol.">
        <title>Known Allergen Structures Predict Schistosoma mansoni IgE-Binding Antigens in Human Infection.</title>
        <authorList>
            <person name="Farnell E.J."/>
            <person name="Tyagi N."/>
            <person name="Ryan S."/>
            <person name="Chalmers I.W."/>
            <person name="Pinot de Moira A."/>
            <person name="Jones F.M."/>
            <person name="Wawrzyniak J."/>
            <person name="Fitzsimmons C.M."/>
            <person name="Tukahebwa E.M."/>
            <person name="Furnham N."/>
            <person name="Maizels R.M."/>
            <person name="Dunne D.W."/>
        </authorList>
    </citation>
    <scope>NUCLEOTIDE SEQUENCE [MRNA]</scope>
    <source>
        <strain evidence="9">Puerto Rican</strain>
    </source>
</reference>
<reference evidence="10" key="2">
    <citation type="journal article" date="2012" name="PLoS Negl. Trop. Dis.">
        <title>A systematically improved high quality genome and transcriptome of the human blood fluke Schistosoma mansoni.</title>
        <authorList>
            <person name="Protasio A.V."/>
            <person name="Tsai I.J."/>
            <person name="Babbage A."/>
            <person name="Nichol S."/>
            <person name="Hunt M."/>
            <person name="Aslett M.A."/>
            <person name="De Silva N."/>
            <person name="Velarde G.S."/>
            <person name="Anderson T.J."/>
            <person name="Clark R.C."/>
            <person name="Davidson C."/>
            <person name="Dillon G.P."/>
            <person name="Holroyd N.E."/>
            <person name="LoVerde P.T."/>
            <person name="Lloyd C."/>
            <person name="McQuillan J."/>
            <person name="Oliveira G."/>
            <person name="Otto T.D."/>
            <person name="Parker-Manuel S.J."/>
            <person name="Quail M.A."/>
            <person name="Wilson R.A."/>
            <person name="Zerlotini A."/>
            <person name="Dunne D.W."/>
            <person name="Berriman M."/>
        </authorList>
    </citation>
    <scope>NUCLEOTIDE SEQUENCE [LARGE SCALE GENOMIC DNA]</scope>
    <source>
        <strain evidence="10">Puerto Rican</strain>
    </source>
</reference>
<reference evidence="12" key="3">
    <citation type="journal article" date="2012" name="Mol. Biochem. Parasitol.">
        <title>Structural and kinetic studies of Schistosoma mansoni adenylate kinases.</title>
        <authorList>
            <person name="de Almeida Marques I."/>
            <person name="Romanello L."/>
            <person name="DeMarco R."/>
            <person name="D'Muniz Pereira H."/>
        </authorList>
    </citation>
    <scope>X-RAY CRYSTALLOGRAPHY (2.05 ANGSTROMS)</scope>
    <scope>FUNCTION</scope>
    <scope>CATALYTIC ACTIVITY</scope>
    <scope>BIOPHYSICOCHEMICAL PROPERTIES</scope>
    <scope>PATHWAY</scope>
    <scope>SUBUNIT</scope>
</reference>
<accession>G4V9S0</accession>
<protein>
    <recommendedName>
        <fullName evidence="5">Adenylate kinase 1</fullName>
        <shortName evidence="5">ADK1</shortName>
        <shortName evidence="7">AK 1</shortName>
        <ecNumber evidence="4">2.7.4.3</ecNumber>
    </recommendedName>
    <alternativeName>
        <fullName evidence="7">ATP-AMP transphosphorylase 1</fullName>
    </alternativeName>
    <alternativeName>
        <fullName evidence="7">ATP:AMP phosphotransferase</fullName>
    </alternativeName>
    <alternativeName>
        <fullName evidence="7">Adenylate monophosphate kinase</fullName>
    </alternativeName>
    <alternativeName>
        <fullName evidence="5">SmADK1</fullName>
    </alternativeName>
    <alternativeName>
        <fullName evidence="6">SmAK</fullName>
    </alternativeName>
</protein>
<evidence type="ECO:0000250" key="1">
    <source>
        <dbReference type="UniProtKB" id="P00568"/>
    </source>
</evidence>
<evidence type="ECO:0000250" key="2">
    <source>
        <dbReference type="UniProtKB" id="P05081"/>
    </source>
</evidence>
<evidence type="ECO:0000250" key="3">
    <source>
        <dbReference type="UniProtKB" id="P69441"/>
    </source>
</evidence>
<evidence type="ECO:0000269" key="4">
    <source>
    </source>
</evidence>
<evidence type="ECO:0000303" key="5">
    <source>
    </source>
</evidence>
<evidence type="ECO:0000303" key="6">
    <source>
    </source>
</evidence>
<evidence type="ECO:0000305" key="7"/>
<evidence type="ECO:0000305" key="8">
    <source>
    </source>
</evidence>
<evidence type="ECO:0000312" key="9">
    <source>
        <dbReference type="EMBL" id="AIW52259.1"/>
    </source>
</evidence>
<evidence type="ECO:0000312" key="10">
    <source>
        <dbReference type="Proteomes" id="UP000008854"/>
    </source>
</evidence>
<evidence type="ECO:0000312" key="11">
    <source>
        <dbReference type="WBParaSite" id="Smp_071390.1"/>
    </source>
</evidence>
<evidence type="ECO:0007744" key="12">
    <source>
        <dbReference type="PDB" id="3UMF"/>
    </source>
</evidence>
<evidence type="ECO:0007829" key="13">
    <source>
        <dbReference type="PDB" id="3UMF"/>
    </source>
</evidence>
<dbReference type="EC" id="2.7.4.3" evidence="4"/>
<dbReference type="EMBL" id="KM281671">
    <property type="protein sequence ID" value="AIW52259.1"/>
    <property type="molecule type" value="mRNA"/>
</dbReference>
<dbReference type="EMBL" id="HE601624">
    <property type="status" value="NOT_ANNOTATED_CDS"/>
    <property type="molecule type" value="Genomic_DNA"/>
</dbReference>
<dbReference type="RefSeq" id="XP_018648199.1">
    <property type="nucleotide sequence ID" value="XM_018793715.1"/>
</dbReference>
<dbReference type="PDB" id="3UMF">
    <property type="method" value="X-ray"/>
    <property type="resolution" value="2.05 A"/>
    <property type="chains" value="A=1-197"/>
</dbReference>
<dbReference type="PDBsum" id="3UMF"/>
<dbReference type="SMR" id="G4V9S0"/>
<dbReference type="FunCoup" id="G4V9S0">
    <property type="interactions" value="261"/>
</dbReference>
<dbReference type="STRING" id="6183.G4V9S0"/>
<dbReference type="EnsemblMetazoa" id="Smp_071390.1">
    <property type="protein sequence ID" value="Smp_071390.1"/>
    <property type="gene ID" value="Smp_071390"/>
</dbReference>
<dbReference type="GeneID" id="8348798"/>
<dbReference type="KEGG" id="smm:Smp_071390"/>
<dbReference type="WBParaSite" id="Smp_071390.1">
    <property type="protein sequence ID" value="Smp_071390.1"/>
    <property type="gene ID" value="Smp_071390"/>
</dbReference>
<dbReference type="CTD" id="8348798"/>
<dbReference type="HOGENOM" id="CLU_032354_0_3_1"/>
<dbReference type="InParanoid" id="G4V9S0"/>
<dbReference type="OMA" id="GTQCDRM"/>
<dbReference type="OrthoDB" id="442176at2759"/>
<dbReference type="UniPathway" id="UPA00488"/>
<dbReference type="EvolutionaryTrace" id="G4V9S0"/>
<dbReference type="Proteomes" id="UP000008854">
    <property type="component" value="Unassembled WGS sequence"/>
</dbReference>
<dbReference type="GO" id="GO:0005737">
    <property type="term" value="C:cytoplasm"/>
    <property type="evidence" value="ECO:0000250"/>
    <property type="project" value="UniProtKB"/>
</dbReference>
<dbReference type="GO" id="GO:0004017">
    <property type="term" value="F:adenylate kinase activity"/>
    <property type="evidence" value="ECO:0000314"/>
    <property type="project" value="UniProtKB"/>
</dbReference>
<dbReference type="GO" id="GO:0016208">
    <property type="term" value="F:AMP binding"/>
    <property type="evidence" value="ECO:0000305"/>
    <property type="project" value="UniProtKB"/>
</dbReference>
<dbReference type="GO" id="GO:0005524">
    <property type="term" value="F:ATP binding"/>
    <property type="evidence" value="ECO:0000305"/>
    <property type="project" value="UniProtKB"/>
</dbReference>
<dbReference type="GO" id="GO:0046083">
    <property type="term" value="P:adenine metabolic process"/>
    <property type="evidence" value="ECO:0000250"/>
    <property type="project" value="UniProtKB"/>
</dbReference>
<dbReference type="GO" id="GO:0006172">
    <property type="term" value="P:ADP biosynthetic process"/>
    <property type="evidence" value="ECO:0000314"/>
    <property type="project" value="UniProtKB"/>
</dbReference>
<dbReference type="GO" id="GO:0006756">
    <property type="term" value="P:AMP phosphorylation"/>
    <property type="evidence" value="ECO:0000314"/>
    <property type="project" value="UniProtKB"/>
</dbReference>
<dbReference type="GO" id="GO:0006166">
    <property type="term" value="P:purine ribonucleoside salvage"/>
    <property type="evidence" value="ECO:0007669"/>
    <property type="project" value="UniProtKB-KW"/>
</dbReference>
<dbReference type="CDD" id="cd01428">
    <property type="entry name" value="ADK"/>
    <property type="match status" value="1"/>
</dbReference>
<dbReference type="FunFam" id="3.40.50.300:FF:000315">
    <property type="entry name" value="Adenylate kinase 1"/>
    <property type="match status" value="1"/>
</dbReference>
<dbReference type="Gene3D" id="3.40.50.300">
    <property type="entry name" value="P-loop containing nucleotide triphosphate hydrolases"/>
    <property type="match status" value="1"/>
</dbReference>
<dbReference type="HAMAP" id="MF_00235">
    <property type="entry name" value="Adenylate_kinase_Adk"/>
    <property type="match status" value="1"/>
</dbReference>
<dbReference type="InterPro" id="IPR000850">
    <property type="entry name" value="Adenylat/UMP-CMP_kin"/>
</dbReference>
<dbReference type="InterPro" id="IPR033690">
    <property type="entry name" value="Adenylat_kinase_CS"/>
</dbReference>
<dbReference type="InterPro" id="IPR027417">
    <property type="entry name" value="P-loop_NTPase"/>
</dbReference>
<dbReference type="PANTHER" id="PTHR23359">
    <property type="entry name" value="NUCLEOTIDE KINASE"/>
    <property type="match status" value="1"/>
</dbReference>
<dbReference type="Pfam" id="PF00406">
    <property type="entry name" value="ADK"/>
    <property type="match status" value="1"/>
</dbReference>
<dbReference type="PRINTS" id="PR00094">
    <property type="entry name" value="ADENYLTKNASE"/>
</dbReference>
<dbReference type="SUPFAM" id="SSF52540">
    <property type="entry name" value="P-loop containing nucleoside triphosphate hydrolases"/>
    <property type="match status" value="1"/>
</dbReference>
<dbReference type="PROSITE" id="PS00113">
    <property type="entry name" value="ADENYLATE_KINASE"/>
    <property type="match status" value="1"/>
</dbReference>
<proteinExistence type="evidence at protein level"/>